<evidence type="ECO:0000255" key="1">
    <source>
        <dbReference type="HAMAP-Rule" id="MF_01503"/>
    </source>
</evidence>
<name>Y2388_CLOB1</name>
<accession>A7FW81</accession>
<dbReference type="EMBL" id="CP000726">
    <property type="protein sequence ID" value="ABS35453.1"/>
    <property type="molecule type" value="Genomic_DNA"/>
</dbReference>
<dbReference type="SMR" id="A7FW81"/>
<dbReference type="KEGG" id="cba:CLB_2388"/>
<dbReference type="HOGENOM" id="CLU_165326_0_0_9"/>
<dbReference type="HAMAP" id="MF_01503">
    <property type="entry name" value="RemA"/>
    <property type="match status" value="1"/>
</dbReference>
<dbReference type="InterPro" id="IPR007169">
    <property type="entry name" value="RemA-like"/>
</dbReference>
<dbReference type="NCBIfam" id="NF046064">
    <property type="entry name" value="MtxBflmRegRemA"/>
    <property type="match status" value="1"/>
</dbReference>
<dbReference type="NCBIfam" id="NF003315">
    <property type="entry name" value="PRK04323.1"/>
    <property type="match status" value="1"/>
</dbReference>
<dbReference type="PANTHER" id="PTHR38449:SF1">
    <property type="entry name" value="REGULATORY PROTEIN SSL2874-RELATED"/>
    <property type="match status" value="1"/>
</dbReference>
<dbReference type="PANTHER" id="PTHR38449">
    <property type="entry name" value="REGULATORY PROTEIN TM_1690-RELATED"/>
    <property type="match status" value="1"/>
</dbReference>
<dbReference type="Pfam" id="PF04025">
    <property type="entry name" value="RemA-like"/>
    <property type="match status" value="1"/>
</dbReference>
<proteinExistence type="inferred from homology"/>
<reference key="1">
    <citation type="journal article" date="2007" name="PLoS ONE">
        <title>Analysis of the neurotoxin complex genes in Clostridium botulinum A1-A4 and B1 strains: BoNT/A3, /Ba4 and /B1 clusters are located within plasmids.</title>
        <authorList>
            <person name="Smith T.J."/>
            <person name="Hill K.K."/>
            <person name="Foley B.T."/>
            <person name="Detter J.C."/>
            <person name="Munk A.C."/>
            <person name="Bruce D.C."/>
            <person name="Doggett N.A."/>
            <person name="Smith L.A."/>
            <person name="Marks J.D."/>
            <person name="Xie G."/>
            <person name="Brettin T.S."/>
        </authorList>
    </citation>
    <scope>NUCLEOTIDE SEQUENCE [LARGE SCALE GENOMIC DNA]</scope>
    <source>
        <strain>ATCC 19397 / Type A</strain>
    </source>
</reference>
<comment type="similarity">
    <text evidence="1">Belongs to the RemA family.</text>
</comment>
<feature type="chain" id="PRO_1000024476" description="Putative regulatory protein CLB_2388">
    <location>
        <begin position="1"/>
        <end position="91"/>
    </location>
</feature>
<gene>
    <name type="ordered locus">CLB_2388</name>
</gene>
<protein>
    <recommendedName>
        <fullName evidence="1">Putative regulatory protein CLB_2388</fullName>
    </recommendedName>
</protein>
<organism>
    <name type="scientific">Clostridium botulinum (strain ATCC 19397 / Type A)</name>
    <dbReference type="NCBI Taxonomy" id="441770"/>
    <lineage>
        <taxon>Bacteria</taxon>
        <taxon>Bacillati</taxon>
        <taxon>Bacillota</taxon>
        <taxon>Clostridia</taxon>
        <taxon>Eubacteriales</taxon>
        <taxon>Clostridiaceae</taxon>
        <taxon>Clostridium</taxon>
    </lineage>
</organism>
<sequence>MAIKLINIGFGNIVSANRLVAIVSPESAPIKRIIQEARDRGMLIDATYGRRTRAVIITDSDHVILSAVQPETVAHRLASKAEEEDINEGEE</sequence>